<dbReference type="EMBL" id="AF066055">
    <property type="protein sequence ID" value="AAF18269.1"/>
    <property type="molecule type" value="mRNA"/>
</dbReference>
<dbReference type="PDB" id="7LVE">
    <property type="method" value="NMR"/>
    <property type="chains" value="A=117-161"/>
</dbReference>
<dbReference type="PDB" id="7LVF">
    <property type="method" value="NMR"/>
    <property type="chains" value="A=1-56"/>
</dbReference>
<dbReference type="PDB" id="7LVG">
    <property type="method" value="NMR"/>
    <property type="chains" value="A=69-111"/>
</dbReference>
<dbReference type="PDBsum" id="7LVE"/>
<dbReference type="PDBsum" id="7LVF"/>
<dbReference type="PDBsum" id="7LVG"/>
<dbReference type="SMR" id="Q9SEW4"/>
<dbReference type="FunCoup" id="Q9SEW4">
    <property type="interactions" value="270"/>
</dbReference>
<dbReference type="Allergome" id="3335">
    <property type="allergen name" value="Jug r 2.0101"/>
</dbReference>
<dbReference type="Allergome" id="425">
    <property type="allergen name" value="Jug r 2"/>
</dbReference>
<dbReference type="InParanoid" id="Q9SEW4"/>
<dbReference type="Proteomes" id="UP000235220">
    <property type="component" value="Unplaced"/>
</dbReference>
<dbReference type="GO" id="GO:0005507">
    <property type="term" value="F:copper ion binding"/>
    <property type="evidence" value="ECO:0000250"/>
    <property type="project" value="UniProtKB"/>
</dbReference>
<dbReference type="GO" id="GO:0045735">
    <property type="term" value="F:nutrient reservoir activity"/>
    <property type="evidence" value="ECO:0000314"/>
    <property type="project" value="UniProtKB"/>
</dbReference>
<dbReference type="CDD" id="cd02245">
    <property type="entry name" value="cupin_7S_vicilin-like_C"/>
    <property type="match status" value="1"/>
</dbReference>
<dbReference type="CDD" id="cd02244">
    <property type="entry name" value="cupin_7S_vicilin-like_N"/>
    <property type="match status" value="1"/>
</dbReference>
<dbReference type="Gene3D" id="6.10.250.890">
    <property type="match status" value="2"/>
</dbReference>
<dbReference type="Gene3D" id="2.60.120.10">
    <property type="entry name" value="Jelly Rolls"/>
    <property type="match status" value="2"/>
</dbReference>
<dbReference type="InterPro" id="IPR006045">
    <property type="entry name" value="Cupin_1"/>
</dbReference>
<dbReference type="InterPro" id="IPR014710">
    <property type="entry name" value="RmlC-like_jellyroll"/>
</dbReference>
<dbReference type="InterPro" id="IPR011051">
    <property type="entry name" value="RmlC_Cupin_sf"/>
</dbReference>
<dbReference type="InterPro" id="IPR050253">
    <property type="entry name" value="Seed_Storage-Functional"/>
</dbReference>
<dbReference type="InterPro" id="IPR006792">
    <property type="entry name" value="Vicilin_N"/>
</dbReference>
<dbReference type="PANTHER" id="PTHR31189">
    <property type="entry name" value="OS03G0336100 PROTEIN-RELATED"/>
    <property type="match status" value="1"/>
</dbReference>
<dbReference type="PANTHER" id="PTHR31189:SF41">
    <property type="entry name" value="VICILIN C72"/>
    <property type="match status" value="1"/>
</dbReference>
<dbReference type="Pfam" id="PF00190">
    <property type="entry name" value="Cupin_1"/>
    <property type="match status" value="2"/>
</dbReference>
<dbReference type="Pfam" id="PF04702">
    <property type="entry name" value="Vicilin_N"/>
    <property type="match status" value="1"/>
</dbReference>
<dbReference type="SMART" id="SM00835">
    <property type="entry name" value="Cupin_1"/>
    <property type="match status" value="2"/>
</dbReference>
<dbReference type="SUPFAM" id="SSF51182">
    <property type="entry name" value="RmlC-like cupins"/>
    <property type="match status" value="2"/>
</dbReference>
<name>VCL2_JUGRE</name>
<keyword id="KW-0002">3D-structure</keyword>
<keyword id="KW-0020">Allergen</keyword>
<keyword id="KW-0175">Coiled coil</keyword>
<keyword id="KW-0186">Copper</keyword>
<keyword id="KW-0903">Direct protein sequencing</keyword>
<keyword id="KW-0325">Glycoprotein</keyword>
<keyword id="KW-0479">Metal-binding</keyword>
<keyword id="KW-1185">Reference proteome</keyword>
<keyword id="KW-0708">Seed storage protein</keyword>
<keyword id="KW-0758">Storage protein</keyword>
<proteinExistence type="evidence at protein level"/>
<reference evidence="22" key="1">
    <citation type="journal article" date="1999" name="J. Allergy Clin. Immunol.">
        <title>Identification and cloning of a complementary DNA encoding a vicilin-like proprotein, jug r 2, from english walnut kernel (Juglans regia), a major food allergen.</title>
        <authorList>
            <person name="Teuber S.S."/>
            <person name="Jarvis K.C."/>
            <person name="Dandekar A.M."/>
            <person name="Peterson W.R."/>
            <person name="Ansari A.A."/>
        </authorList>
    </citation>
    <scope>NUCLEOTIDE SEQUENCE [MRNA]</scope>
    <scope>PROTEIN SEQUENCE OF 173-185</scope>
    <scope>TISSUE SPECIFICITY</scope>
    <scope>ALLERGEN</scope>
    <scope>PROTEOLYTIC CLEAVAGE</scope>
    <source>
        <strain evidence="22">cv. Sunland</strain>
        <tissue evidence="11 22">Somatic embryo</tissue>
    </source>
</reference>
<reference key="2">
    <citation type="journal article" date="2014" name="J. Agric. Food Chem.">
        <title>Characterization of low molecular weight allergens from English walnut (Juglans regia).</title>
        <authorList>
            <person name="Downs M.L."/>
            <person name="Semic-Jusufagic A."/>
            <person name="Simpson A."/>
            <person name="Bartra J."/>
            <person name="Fernandez-Rivas M."/>
            <person name="Rigby N.M."/>
            <person name="Taylor S.L."/>
            <person name="Baumert J.L."/>
            <person name="Mills E.N."/>
        </authorList>
    </citation>
    <scope>PROTEIN SEQUENCE OF 20-26; 52-58; 76-85; 88-96; 89-96; 103-108; 104-108; 117-125; 129-139 AND 130-139</scope>
    <scope>TISSUE SPECIFICITY</scope>
    <scope>IDENTIFICATION BY MASS SPECTROMETRY</scope>
    <source>
        <strain evidence="14">cv. Chandler</strain>
    </source>
</reference>
<reference key="3">
    <citation type="journal article" date="2018" name="Sci. Rep.">
        <title>Jug r 6 is the allergenic vicilin present in walnut responsible for IgE cross-reactivities to other tree nuts and seeds.</title>
        <authorList>
            <person name="Dubiela P."/>
            <person name="Kabasser S."/>
            <person name="Smargiasso N."/>
            <person name="Geiselhart S."/>
            <person name="Bublin M."/>
            <person name="Hafner C."/>
            <person name="Mazzucchelli G."/>
            <person name="Hoffmann-Sommergruber K."/>
        </authorList>
    </citation>
    <scope>PROTEIN SEQUENCE OF 172-179</scope>
    <scope>TISSUE SPECIFICITY</scope>
    <scope>ALLERGEN</scope>
</reference>
<reference key="4">
    <citation type="journal article" date="2011" name="Allergy">
        <title>Computationally predicted IgE epitopes of walnut allergens contribute to cross-reactivity with peanuts.</title>
        <authorList>
            <person name="Maleki S.J."/>
            <person name="Teuber S.S."/>
            <person name="Cheng H."/>
            <person name="Chen D."/>
            <person name="Comstock S.S."/>
            <person name="Ruan S."/>
            <person name="Schein C.H."/>
        </authorList>
    </citation>
    <scope>TISSUE SPECIFICITY</scope>
    <scope>ALLERGEN</scope>
    <scope>REGIONS</scope>
</reference>
<reference key="5">
    <citation type="journal article" date="2012" name="Int. Arch. Allergy Immunol.">
        <title>Walnut allergy in peanut-allergic patients: significance of sequential epitopes of walnut homologous to linear epitopes of Ara h 1, 2 and 3 in relation to clinical reactivity.</title>
        <authorList>
            <person name="Rosenfeld L."/>
            <person name="Shreffler W."/>
            <person name="Bardina L."/>
            <person name="Niggemann B."/>
            <person name="Wahn U."/>
            <person name="Sampson H.A."/>
            <person name="Beyer K."/>
        </authorList>
    </citation>
    <scope>ALLERGEN</scope>
    <scope>REGION</scope>
</reference>
<reference key="6">
    <citation type="journal article" date="2015" name="J. Allergy Clin. Immunol.">
        <title>Jug r 2-reactive CD4(+) T cells have a dominant immune role in walnut allergy.</title>
        <authorList>
            <person name="Archila L.D."/>
            <person name="Jeong D."/>
            <person name="Pascal M."/>
            <person name="Bartra J."/>
            <person name="Juan M."/>
            <person name="Robinson D."/>
            <person name="Farrington M.L."/>
            <person name="Kwok W.W."/>
        </authorList>
    </citation>
    <scope>ALLERGEN</scope>
    <scope>REGIONS</scope>
</reference>
<evidence type="ECO:0000250" key="1">
    <source>
        <dbReference type="UniProtKB" id="B3STU4"/>
    </source>
</evidence>
<evidence type="ECO:0000255" key="2"/>
<evidence type="ECO:0000255" key="3">
    <source>
        <dbReference type="PROSITE-ProRule" id="PRU00498"/>
    </source>
</evidence>
<evidence type="ECO:0000256" key="4">
    <source>
        <dbReference type="SAM" id="MobiDB-lite"/>
    </source>
</evidence>
<evidence type="ECO:0000269" key="5">
    <source>
    </source>
</evidence>
<evidence type="ECO:0000269" key="6">
    <source>
    </source>
</evidence>
<evidence type="ECO:0000269" key="7">
    <source>
    </source>
</evidence>
<evidence type="ECO:0000269" key="8">
    <source>
    </source>
</evidence>
<evidence type="ECO:0000269" key="9">
    <source>
    </source>
</evidence>
<evidence type="ECO:0000269" key="10">
    <source>
    </source>
</evidence>
<evidence type="ECO:0000303" key="11">
    <source>
    </source>
</evidence>
<evidence type="ECO:0000303" key="12">
    <source>
    </source>
</evidence>
<evidence type="ECO:0000303" key="13">
    <source>
    </source>
</evidence>
<evidence type="ECO:0000303" key="14">
    <source>
    </source>
</evidence>
<evidence type="ECO:0000303" key="15">
    <source>
    </source>
</evidence>
<evidence type="ECO:0000303" key="16">
    <source>
    </source>
</evidence>
<evidence type="ECO:0000305" key="17"/>
<evidence type="ECO:0000305" key="18">
    <source>
    </source>
</evidence>
<evidence type="ECO:0000305" key="19">
    <source>
    </source>
</evidence>
<evidence type="ECO:0000305" key="20">
    <source>
    </source>
</evidence>
<evidence type="ECO:0000305" key="21">
    <source>
    </source>
</evidence>
<evidence type="ECO:0000312" key="22">
    <source>
        <dbReference type="EMBL" id="AAF18269.1"/>
    </source>
</evidence>
<evidence type="ECO:0007829" key="23">
    <source>
        <dbReference type="PDB" id="7LVE"/>
    </source>
</evidence>
<evidence type="ECO:0007829" key="24">
    <source>
        <dbReference type="PDB" id="7LVF"/>
    </source>
</evidence>
<evidence type="ECO:0007829" key="25">
    <source>
        <dbReference type="PDB" id="7LVG"/>
    </source>
</evidence>
<organism evidence="22">
    <name type="scientific">Juglans regia</name>
    <name type="common">English walnut</name>
    <dbReference type="NCBI Taxonomy" id="51240"/>
    <lineage>
        <taxon>Eukaryota</taxon>
        <taxon>Viridiplantae</taxon>
        <taxon>Streptophyta</taxon>
        <taxon>Embryophyta</taxon>
        <taxon>Tracheophyta</taxon>
        <taxon>Spermatophyta</taxon>
        <taxon>Magnoliopsida</taxon>
        <taxon>eudicotyledons</taxon>
        <taxon>Gunneridae</taxon>
        <taxon>Pentapetalae</taxon>
        <taxon>rosids</taxon>
        <taxon>fabids</taxon>
        <taxon>Fagales</taxon>
        <taxon>Juglandaceae</taxon>
        <taxon>Juglans</taxon>
    </lineage>
</organism>
<protein>
    <recommendedName>
        <fullName evidence="17">Vicilin Jug r 2.0101</fullName>
    </recommendedName>
    <alternativeName>
        <fullName evidence="11 13 14">7S globulin</fullName>
    </alternativeName>
    <alternativeName>
        <fullName evidence="11 14">7S seed storage protein</fullName>
    </alternativeName>
    <alternativeName>
        <fullName evidence="11 12 13 15 16">Allergen Jug r 2</fullName>
    </alternativeName>
    <alternativeName>
        <fullName evidence="12">Vicilin Jug r 2</fullName>
    </alternativeName>
    <alternativeName>
        <fullName evidence="11 14 15 16">Vicilin-like Jug r 2</fullName>
    </alternativeName>
    <allergenName evidence="17">Jug r 2.0101</allergenName>
</protein>
<feature type="chain" id="PRO_0000450861" description="Vicilin Jug r 2.0101">
    <location>
        <begin position="1" status="less than"/>
        <end position="593"/>
    </location>
</feature>
<feature type="domain" description="Cupin type-1 1" evidence="2">
    <location>
        <begin position="187"/>
        <end position="341"/>
    </location>
</feature>
<feature type="domain" description="Cupin type-1 2" evidence="2">
    <location>
        <begin position="386"/>
        <end position="556"/>
    </location>
</feature>
<feature type="region of interest" description="Disordered" evidence="4">
    <location>
        <begin position="46"/>
        <end position="123"/>
    </location>
</feature>
<feature type="region of interest" description="IgE-binding" evidence="6">
    <location>
        <begin position="49"/>
        <end position="58"/>
    </location>
</feature>
<feature type="region of interest" description="IgE-binding" evidence="6">
    <location>
        <begin position="76"/>
        <end position="85"/>
    </location>
</feature>
<feature type="region of interest" description="IgE-binding" evidence="6">
    <location>
        <begin position="101"/>
        <end position="110"/>
    </location>
</feature>
<feature type="region of interest" description="IgE-binding. Involved in cross-reactivity with peanut allergen Ara h 2; able to inhibit binding of IgE from a peanut-allergic patient to Ara h 2" evidence="6">
    <location>
        <begin position="140"/>
        <end position="149"/>
    </location>
</feature>
<feature type="region of interest" description="Disordered" evidence="4">
    <location>
        <begin position="150"/>
        <end position="184"/>
    </location>
</feature>
<feature type="region of interest" description="T-cell epitope; recognized by the HLA-DRB1-restricted CD4(+) T-cells" evidence="9">
    <location>
        <begin position="175"/>
        <end position="193"/>
    </location>
</feature>
<feature type="region of interest" description="T-cell epitope; recognized by the HLA-DRB1-restricted CD4(+) T-cells" evidence="9">
    <location>
        <begin position="206"/>
        <end position="225"/>
    </location>
</feature>
<feature type="region of interest" description="T-cell epitope; recognized by the HLA-DRB1-restricted CD4(+) T-cells" evidence="9">
    <location>
        <begin position="246"/>
        <end position="265"/>
    </location>
</feature>
<feature type="region of interest" description="T-cell epitope; recognized by the HLA-DRB1-restricted CD4(+) T-cells" evidence="9">
    <location>
        <begin position="302"/>
        <end position="321"/>
    </location>
</feature>
<feature type="region of interest" description="T-cell epitope; recognized by the HLA-DRB1-restricted CD4(+) T-cells" evidence="9">
    <location>
        <begin position="318"/>
        <end position="337"/>
    </location>
</feature>
<feature type="region of interest" description="T-cell epitope; recognized by the HLA-DRB1-restricted CD4(+) T-cells" evidence="9">
    <location>
        <begin position="382"/>
        <end position="401"/>
    </location>
</feature>
<feature type="region of interest" description="T-cell epitope; recognized by the HLA-DRB1-restricted CD4(+) T-cells" evidence="9">
    <location>
        <begin position="414"/>
        <end position="433"/>
    </location>
</feature>
<feature type="region of interest" description="T-cell epitope; recognized by the HLA-DRB1-restricted CD4(+) T-cells" evidence="9">
    <location>
        <begin position="438"/>
        <end position="457"/>
    </location>
</feature>
<feature type="region of interest" description="IgE-binding" evidence="6">
    <location>
        <begin position="463"/>
        <end position="470"/>
    </location>
</feature>
<feature type="region of interest" description="T-cell epitope; recognized by the HLA-DRB1-restricted CD4(+) T-cells" evidence="9">
    <location>
        <begin position="478"/>
        <end position="497"/>
    </location>
</feature>
<feature type="region of interest" description="IgE-binding" evidence="7">
    <location>
        <begin position="541"/>
        <end position="555"/>
    </location>
</feature>
<feature type="region of interest" description="T-cell epitope; recognized by the HLA-DRB1-restricted CD4(+) T-cells" evidence="9">
    <location>
        <begin position="542"/>
        <end position="561"/>
    </location>
</feature>
<feature type="region of interest" description="T-cell epitope; recognized by the HLA-DRB1-restricted CD4(+) T-cells" evidence="9">
    <location>
        <begin position="558"/>
        <end position="577"/>
    </location>
</feature>
<feature type="coiled-coil region" evidence="2">
    <location>
        <begin position="529"/>
        <end position="556"/>
    </location>
</feature>
<feature type="compositionally biased region" description="Basic and acidic residues" evidence="4">
    <location>
        <begin position="46"/>
        <end position="76"/>
    </location>
</feature>
<feature type="compositionally biased region" description="Basic and acidic residues" evidence="4">
    <location>
        <begin position="97"/>
        <end position="118"/>
    </location>
</feature>
<feature type="compositionally biased region" description="Basic and acidic residues" evidence="4">
    <location>
        <begin position="150"/>
        <end position="178"/>
    </location>
</feature>
<feature type="binding site" evidence="1">
    <location>
        <position position="182"/>
    </location>
    <ligand>
        <name>Cu cation</name>
        <dbReference type="ChEBI" id="CHEBI:23378"/>
    </ligand>
</feature>
<feature type="binding site" evidence="1">
    <location>
        <position position="456"/>
    </location>
    <ligand>
        <name>Cu cation</name>
        <dbReference type="ChEBI" id="CHEBI:23378"/>
    </ligand>
</feature>
<feature type="binding site" evidence="1">
    <location>
        <position position="458"/>
    </location>
    <ligand>
        <name>Cu cation</name>
        <dbReference type="ChEBI" id="CHEBI:23378"/>
    </ligand>
</feature>
<feature type="binding site" evidence="1">
    <location>
        <position position="500"/>
    </location>
    <ligand>
        <name>Cu cation</name>
        <dbReference type="ChEBI" id="CHEBI:23378"/>
    </ligand>
</feature>
<feature type="glycosylation site" description="N-linked (GlcNAc...) asparagine" evidence="3">
    <location>
        <position position="229"/>
    </location>
</feature>
<feature type="non-terminal residue" evidence="22">
    <location>
        <position position="1"/>
    </location>
</feature>
<feature type="helix" evidence="24">
    <location>
        <begin position="14"/>
        <end position="27"/>
    </location>
</feature>
<feature type="helix" evidence="24">
    <location>
        <begin position="32"/>
        <end position="52"/>
    </location>
</feature>
<feature type="helix" evidence="25">
    <location>
        <begin position="72"/>
        <end position="86"/>
    </location>
</feature>
<feature type="helix" evidence="25">
    <location>
        <begin position="91"/>
        <end position="108"/>
    </location>
</feature>
<feature type="helix" evidence="23">
    <location>
        <begin position="119"/>
        <end position="132"/>
    </location>
</feature>
<feature type="helix" evidence="23">
    <location>
        <begin position="137"/>
        <end position="154"/>
    </location>
</feature>
<comment type="function">
    <text evidence="18 19 20 21">Seed storage protein.</text>
</comment>
<comment type="tissue specificity">
    <text evidence="5 6 8 10">Expressed in seed (at protein level).</text>
</comment>
<comment type="PTM">
    <text evidence="5">Proteolytically cleaved.</text>
</comment>
<comment type="allergen">
    <text evidence="5 6 7 9 10">Causes an allergic reaction in human. Binds to IgE of patients allergic to walnuts (PubMed:10589017, PubMed:21883278, PubMed:22042002, PubMed:25772597, PubMed:30054513). Binds to IgE of patients allergic to peanuts (PubMed:21883278, PubMed:22042002). Recombinant protein binds to IgE in 60% of the 15 patients tested allergic to walnuts (PubMed:10589017). Natural protein binds to IgE in 67% of the 6 patients tested allergic to peanuts and/or walnuts (PubMed:21883278). Binds to IgE in 53% of the 17 patients tested allergic to walnuts. Provokes CD4(+) T-cell responses. The central memory CD4(+) T-cells are the most prevalent phenotype detected in the peripheral blood of the patients. T-helper 2 (Th2) cells are prominent among the terminal effector T-cells, but T-helper 17 (Th17) and Th2/Th17 cells are also detected (PubMed:25772597).</text>
</comment>
<comment type="similarity">
    <text evidence="17">Belongs to the 7S seed storage protein family.</text>
</comment>
<comment type="caution">
    <text evidence="18 21">It is uncertain whether cleavage occurs at Arg-172 or Glu-173.</text>
</comment>
<sequence>RGRDDDDEENPRDPREQYRQCQEYCRRQGQGQRQQQQCQIRCEERLEEDQRSQEERERRRGRDVDDQNPRDPEQRYEQCQQQCERQRRGQEQTLCRRRCEQRRQQEERERQRGRDRQDPQQQYHRCQRRCQIQEQSPERQRQCQQRCERQYKEQQGRERGPEASPRRESRGREEEQQRHNPYYFHSQSIRSRHESEEGEVKYLERFTERTELLRGIENYRVVILDANPNTSMLPHHKDAESVAVVTRGRATLTLVSQETRESFNLECGDVIRVPAGATVYVINQDSNERLEMVKLLQPVNNPGQFREYYAAGAKSPDQSYLRVFSNDILVAALNTPRDRLERFFDQQEQREGVIIRASQEKLRALSQHAMSAGQRPWGRRSSGGPISLKSESPSYSNQFGQFFEACPEEHRQLQEMDVLVNYAEIKRGAMMVPHYNSKATVVVYVVEGTGRYEMACPHVSSQSYEGQGRREQEEEESTGRFQKVTARLARGDIFVIPAGHPIAITASQNENLRLLGFDINGENNQRDFLAGQNNIINQLEREAKELSFNMPREEIEEIFESQMESYFVPTERQSRRGQGRDHPLASILDFAFF</sequence>
<accession>Q9SEW4</accession>